<sequence>MIILDGKKLSQKDTIFLKEKVNQFKIKPVFTIVQVGNLFSSNKYIKTKMDKALEIGVVSRLIKIPESISEKDLISIIEEESKISHGLIVQLPLPLQFDQSKILNSVPITKDIDGLSEKNSKNLYSGKSCIQPATARGIIDLIKEYNFTIKDKKVYVIGESNLVGKPIKELFKQAGAIVKSFNINTGIKGSEEADILIVAAGHPNLVKPENVKNNSIVIDVGINSIGENDKMIVTGDVDFSNVKTKVKAISPVPGGVGPMTVISLFKNLIEIFEKYLLDDN</sequence>
<dbReference type="EC" id="1.5.1.5" evidence="1"/>
<dbReference type="EC" id="3.5.4.9" evidence="1"/>
<dbReference type="EMBL" id="AE017308">
    <property type="protein sequence ID" value="AAT27646.1"/>
    <property type="molecule type" value="Genomic_DNA"/>
</dbReference>
<dbReference type="RefSeq" id="WP_011264680.1">
    <property type="nucleotide sequence ID" value="NC_006908.1"/>
</dbReference>
<dbReference type="SMR" id="Q6KID0"/>
<dbReference type="STRING" id="267748.MMOB1600"/>
<dbReference type="KEGG" id="mmo:MMOB1600"/>
<dbReference type="eggNOG" id="COG0190">
    <property type="taxonomic scope" value="Bacteria"/>
</dbReference>
<dbReference type="HOGENOM" id="CLU_034045_2_0_14"/>
<dbReference type="OrthoDB" id="9803580at2"/>
<dbReference type="UniPathway" id="UPA00193"/>
<dbReference type="Proteomes" id="UP000009072">
    <property type="component" value="Chromosome"/>
</dbReference>
<dbReference type="GO" id="GO:0005829">
    <property type="term" value="C:cytosol"/>
    <property type="evidence" value="ECO:0007669"/>
    <property type="project" value="TreeGrafter"/>
</dbReference>
<dbReference type="GO" id="GO:0004477">
    <property type="term" value="F:methenyltetrahydrofolate cyclohydrolase activity"/>
    <property type="evidence" value="ECO:0007669"/>
    <property type="project" value="UniProtKB-UniRule"/>
</dbReference>
<dbReference type="GO" id="GO:0004488">
    <property type="term" value="F:methylenetetrahydrofolate dehydrogenase (NADP+) activity"/>
    <property type="evidence" value="ECO:0007669"/>
    <property type="project" value="UniProtKB-UniRule"/>
</dbReference>
<dbReference type="GO" id="GO:0000105">
    <property type="term" value="P:L-histidine biosynthetic process"/>
    <property type="evidence" value="ECO:0007669"/>
    <property type="project" value="UniProtKB-KW"/>
</dbReference>
<dbReference type="GO" id="GO:0009086">
    <property type="term" value="P:methionine biosynthetic process"/>
    <property type="evidence" value="ECO:0007669"/>
    <property type="project" value="UniProtKB-KW"/>
</dbReference>
<dbReference type="GO" id="GO:0006164">
    <property type="term" value="P:purine nucleotide biosynthetic process"/>
    <property type="evidence" value="ECO:0007669"/>
    <property type="project" value="UniProtKB-KW"/>
</dbReference>
<dbReference type="GO" id="GO:0035999">
    <property type="term" value="P:tetrahydrofolate interconversion"/>
    <property type="evidence" value="ECO:0007669"/>
    <property type="project" value="UniProtKB-UniRule"/>
</dbReference>
<dbReference type="CDD" id="cd01080">
    <property type="entry name" value="NAD_bind_m-THF_DH_Cyclohyd"/>
    <property type="match status" value="1"/>
</dbReference>
<dbReference type="Gene3D" id="3.40.50.10860">
    <property type="entry name" value="Leucine Dehydrogenase, chain A, domain 1"/>
    <property type="match status" value="1"/>
</dbReference>
<dbReference type="Gene3D" id="3.40.50.720">
    <property type="entry name" value="NAD(P)-binding Rossmann-like Domain"/>
    <property type="match status" value="1"/>
</dbReference>
<dbReference type="HAMAP" id="MF_01576">
    <property type="entry name" value="THF_DHG_CYH"/>
    <property type="match status" value="1"/>
</dbReference>
<dbReference type="InterPro" id="IPR046346">
    <property type="entry name" value="Aminoacid_DH-like_N_sf"/>
</dbReference>
<dbReference type="InterPro" id="IPR036291">
    <property type="entry name" value="NAD(P)-bd_dom_sf"/>
</dbReference>
<dbReference type="InterPro" id="IPR000672">
    <property type="entry name" value="THF_DH/CycHdrlase"/>
</dbReference>
<dbReference type="InterPro" id="IPR020630">
    <property type="entry name" value="THF_DH/CycHdrlase_cat_dom"/>
</dbReference>
<dbReference type="InterPro" id="IPR020867">
    <property type="entry name" value="THF_DH/CycHdrlase_CS"/>
</dbReference>
<dbReference type="InterPro" id="IPR020631">
    <property type="entry name" value="THF_DH/CycHdrlase_NAD-bd_dom"/>
</dbReference>
<dbReference type="PANTHER" id="PTHR48099:SF5">
    <property type="entry name" value="C-1-TETRAHYDROFOLATE SYNTHASE, CYTOPLASMIC"/>
    <property type="match status" value="1"/>
</dbReference>
<dbReference type="PANTHER" id="PTHR48099">
    <property type="entry name" value="C-1-TETRAHYDROFOLATE SYNTHASE, CYTOPLASMIC-RELATED"/>
    <property type="match status" value="1"/>
</dbReference>
<dbReference type="Pfam" id="PF00763">
    <property type="entry name" value="THF_DHG_CYH"/>
    <property type="match status" value="1"/>
</dbReference>
<dbReference type="Pfam" id="PF02882">
    <property type="entry name" value="THF_DHG_CYH_C"/>
    <property type="match status" value="1"/>
</dbReference>
<dbReference type="PRINTS" id="PR00085">
    <property type="entry name" value="THFDHDRGNASE"/>
</dbReference>
<dbReference type="SUPFAM" id="SSF53223">
    <property type="entry name" value="Aminoacid dehydrogenase-like, N-terminal domain"/>
    <property type="match status" value="1"/>
</dbReference>
<dbReference type="SUPFAM" id="SSF51735">
    <property type="entry name" value="NAD(P)-binding Rossmann-fold domains"/>
    <property type="match status" value="1"/>
</dbReference>
<dbReference type="PROSITE" id="PS00767">
    <property type="entry name" value="THF_DHG_CYH_2"/>
    <property type="match status" value="1"/>
</dbReference>
<gene>
    <name evidence="1" type="primary">folD</name>
    <name type="ordered locus">MMOB1600</name>
</gene>
<accession>Q6KID0</accession>
<protein>
    <recommendedName>
        <fullName evidence="1">Bifunctional protein FolD</fullName>
    </recommendedName>
    <domain>
        <recommendedName>
            <fullName evidence="1">Methylenetetrahydrofolate dehydrogenase</fullName>
            <ecNumber evidence="1">1.5.1.5</ecNumber>
        </recommendedName>
    </domain>
    <domain>
        <recommendedName>
            <fullName evidence="1">Methenyltetrahydrofolate cyclohydrolase</fullName>
            <ecNumber evidence="1">3.5.4.9</ecNumber>
        </recommendedName>
    </domain>
</protein>
<feature type="chain" id="PRO_0000268407" description="Bifunctional protein FolD">
    <location>
        <begin position="1"/>
        <end position="280"/>
    </location>
</feature>
<feature type="binding site" evidence="1">
    <location>
        <begin position="158"/>
        <end position="160"/>
    </location>
    <ligand>
        <name>NADP(+)</name>
        <dbReference type="ChEBI" id="CHEBI:58349"/>
    </ligand>
</feature>
<feature type="binding site" evidence="1">
    <location>
        <position position="183"/>
    </location>
    <ligand>
        <name>NADP(+)</name>
        <dbReference type="ChEBI" id="CHEBI:58349"/>
    </ligand>
</feature>
<feature type="binding site" evidence="1">
    <location>
        <position position="222"/>
    </location>
    <ligand>
        <name>NADP(+)</name>
        <dbReference type="ChEBI" id="CHEBI:58349"/>
    </ligand>
</feature>
<proteinExistence type="inferred from homology"/>
<keyword id="KW-0028">Amino-acid biosynthesis</keyword>
<keyword id="KW-0368">Histidine biosynthesis</keyword>
<keyword id="KW-0378">Hydrolase</keyword>
<keyword id="KW-0486">Methionine biosynthesis</keyword>
<keyword id="KW-0511">Multifunctional enzyme</keyword>
<keyword id="KW-0521">NADP</keyword>
<keyword id="KW-0554">One-carbon metabolism</keyword>
<keyword id="KW-0560">Oxidoreductase</keyword>
<keyword id="KW-0658">Purine biosynthesis</keyword>
<keyword id="KW-1185">Reference proteome</keyword>
<comment type="function">
    <text evidence="1">Catalyzes the oxidation of 5,10-methylenetetrahydrofolate to 5,10-methenyltetrahydrofolate and then the hydrolysis of 5,10-methenyltetrahydrofolate to 10-formyltetrahydrofolate.</text>
</comment>
<comment type="catalytic activity">
    <reaction evidence="1">
        <text>(6R)-5,10-methylene-5,6,7,8-tetrahydrofolate + NADP(+) = (6R)-5,10-methenyltetrahydrofolate + NADPH</text>
        <dbReference type="Rhea" id="RHEA:22812"/>
        <dbReference type="ChEBI" id="CHEBI:15636"/>
        <dbReference type="ChEBI" id="CHEBI:57455"/>
        <dbReference type="ChEBI" id="CHEBI:57783"/>
        <dbReference type="ChEBI" id="CHEBI:58349"/>
        <dbReference type="EC" id="1.5.1.5"/>
    </reaction>
</comment>
<comment type="catalytic activity">
    <reaction evidence="1">
        <text>(6R)-5,10-methenyltetrahydrofolate + H2O = (6R)-10-formyltetrahydrofolate + H(+)</text>
        <dbReference type="Rhea" id="RHEA:23700"/>
        <dbReference type="ChEBI" id="CHEBI:15377"/>
        <dbReference type="ChEBI" id="CHEBI:15378"/>
        <dbReference type="ChEBI" id="CHEBI:57455"/>
        <dbReference type="ChEBI" id="CHEBI:195366"/>
        <dbReference type="EC" id="3.5.4.9"/>
    </reaction>
</comment>
<comment type="pathway">
    <text evidence="1">One-carbon metabolism; tetrahydrofolate interconversion.</text>
</comment>
<comment type="subunit">
    <text evidence="1">Homodimer.</text>
</comment>
<comment type="similarity">
    <text evidence="1">Belongs to the tetrahydrofolate dehydrogenase/cyclohydrolase family.</text>
</comment>
<name>FOLD_MYCM1</name>
<reference key="1">
    <citation type="journal article" date="2004" name="Genome Res.">
        <title>The complete genome and proteome of Mycoplasma mobile.</title>
        <authorList>
            <person name="Jaffe J.D."/>
            <person name="Stange-Thomann N."/>
            <person name="Smith C."/>
            <person name="DeCaprio D."/>
            <person name="Fisher S."/>
            <person name="Butler J."/>
            <person name="Calvo S."/>
            <person name="Elkins T."/>
            <person name="FitzGerald M.G."/>
            <person name="Hafez N."/>
            <person name="Kodira C.D."/>
            <person name="Major J."/>
            <person name="Wang S."/>
            <person name="Wilkinson J."/>
            <person name="Nicol R."/>
            <person name="Nusbaum C."/>
            <person name="Birren B."/>
            <person name="Berg H.C."/>
            <person name="Church G.M."/>
        </authorList>
    </citation>
    <scope>NUCLEOTIDE SEQUENCE [LARGE SCALE GENOMIC DNA]</scope>
    <source>
        <strain>ATCC 43663 / NCTC 11711 / 163 K</strain>
    </source>
</reference>
<organism>
    <name type="scientific">Mycoplasma mobile (strain ATCC 43663 / 163K / NCTC 11711)</name>
    <name type="common">Mesomycoplasma mobile</name>
    <dbReference type="NCBI Taxonomy" id="267748"/>
    <lineage>
        <taxon>Bacteria</taxon>
        <taxon>Bacillati</taxon>
        <taxon>Mycoplasmatota</taxon>
        <taxon>Mycoplasmoidales</taxon>
        <taxon>Metamycoplasmataceae</taxon>
        <taxon>Mesomycoplasma</taxon>
    </lineage>
</organism>
<evidence type="ECO:0000255" key="1">
    <source>
        <dbReference type="HAMAP-Rule" id="MF_01576"/>
    </source>
</evidence>